<evidence type="ECO:0000255" key="1"/>
<evidence type="ECO:0000269" key="2">
    <source>
    </source>
</evidence>
<evidence type="ECO:0000269" key="3">
    <source>
    </source>
</evidence>
<evidence type="ECO:0000269" key="4">
    <source>
    </source>
</evidence>
<evidence type="ECO:0000303" key="5">
    <source>
    </source>
</evidence>
<evidence type="ECO:0000305" key="6"/>
<evidence type="ECO:0000312" key="7">
    <source>
        <dbReference type="Proteomes" id="UP000001940"/>
    </source>
</evidence>
<evidence type="ECO:0000312" key="8">
    <source>
        <dbReference type="WormBase" id="R11A5.2"/>
    </source>
</evidence>
<gene>
    <name evidence="5 8" type="primary">nud-2</name>
    <name evidence="8" type="ORF">R11A5.2</name>
</gene>
<comment type="function">
    <text evidence="2 3 4">Part of a complex with lis-1, which is recruited to the nuclear envelope by unc-83, where, in turn, it recruits dynein to the nuclear surface and regulates nuclear migration in hypodermal precursor cells (PubMed:20005871, PubMed:27697906). Plays a role in GABAergic synaptic vesicle localization in the ventral nerve cord (PubMed:16996038).</text>
</comment>
<comment type="subunit">
    <text evidence="2 3">Component of a dynein-regulating complex composed of at least lis-1 and nud-2 (PubMed:20005871). Interacts with lis-1; the interaction is direct (PubMed:16996038). Interacts (via C-terminus) with unc-83; the interaction is direct, and is required for recruitment of nud-2 to the nuclear envelope (PubMed:20005871).</text>
</comment>
<comment type="interaction">
    <interactant intactId="EBI-326083">
        <id>O45717</id>
    </interactant>
    <interactant intactId="EBI-322716">
        <id>Q20398</id>
        <label>magu-4</label>
    </interactant>
    <organismsDiffer>false</organismsDiffer>
    <experiments>4</experiments>
</comment>
<comment type="subcellular location">
    <subcellularLocation>
        <location evidence="3">Nucleus envelope</location>
    </subcellularLocation>
    <text evidence="3">Recruited to the nuclear envelope by unc-83.</text>
</comment>
<comment type="tissue specificity">
    <text evidence="2">Expressed in ventral cord neurons, the pharynx, seam cells of the hypodermis and in vulval muscle cells.</text>
</comment>
<comment type="disruption phenotype">
    <text evidence="2 3">RNAi-mediated knockdown results in viable animals, but a small, but significant number of animals have nuclear migration defects in hyp7 hypodermal precursor cells (PubMed:20005871). RNAi-mediated knockdown results in an abnormal distribution of GABAergic synaptic vesicles at synaptic termini of the ventral nerve cord (PubMed:16996038). RNAi-mediated knockdown in combination with exposure to pentylenetetrazole, a GABA antagonist that induces seizures, results in impaired locomotion, stiffened appearance and an increased convulsion incidence as compared to wild-type animals (PubMed:16996038).</text>
</comment>
<comment type="similarity">
    <text evidence="6">Belongs to the nudE family.</text>
</comment>
<accession>O45717</accession>
<proteinExistence type="evidence at protein level"/>
<dbReference type="EMBL" id="BX284601">
    <property type="protein sequence ID" value="CAB05597.1"/>
    <property type="molecule type" value="Genomic_DNA"/>
</dbReference>
<dbReference type="PIR" id="T24165">
    <property type="entry name" value="T24165"/>
</dbReference>
<dbReference type="RefSeq" id="NP_492172.1">
    <property type="nucleotide sequence ID" value="NM_059771.7"/>
</dbReference>
<dbReference type="SMR" id="O45717"/>
<dbReference type="ComplexPortal" id="CPX-1389">
    <property type="entry name" value="lis-1-nud-2 microtubule-associated dynein motor complex"/>
</dbReference>
<dbReference type="FunCoup" id="O45717">
    <property type="interactions" value="5"/>
</dbReference>
<dbReference type="IntAct" id="O45717">
    <property type="interactions" value="6"/>
</dbReference>
<dbReference type="STRING" id="6239.R11A5.2.1"/>
<dbReference type="PaxDb" id="6239-R11A5.2"/>
<dbReference type="PeptideAtlas" id="O45717"/>
<dbReference type="EnsemblMetazoa" id="R11A5.2.1">
    <property type="protein sequence ID" value="R11A5.2.1"/>
    <property type="gene ID" value="WBGene00011230"/>
</dbReference>
<dbReference type="GeneID" id="172554"/>
<dbReference type="KEGG" id="cel:CELE_R11A5.2"/>
<dbReference type="UCSC" id="R11A5.2">
    <property type="organism name" value="c. elegans"/>
</dbReference>
<dbReference type="AGR" id="WB:WBGene00011230"/>
<dbReference type="CTD" id="172554"/>
<dbReference type="WormBase" id="R11A5.2">
    <property type="protein sequence ID" value="CE12724"/>
    <property type="gene ID" value="WBGene00011230"/>
    <property type="gene designation" value="nud-2"/>
</dbReference>
<dbReference type="eggNOG" id="KOG1853">
    <property type="taxonomic scope" value="Eukaryota"/>
</dbReference>
<dbReference type="GeneTree" id="ENSGT00390000000111"/>
<dbReference type="HOGENOM" id="CLU_918979_0_0_1"/>
<dbReference type="InParanoid" id="O45717"/>
<dbReference type="OMA" id="SCVNRIV"/>
<dbReference type="OrthoDB" id="5877028at2759"/>
<dbReference type="PhylomeDB" id="O45717"/>
<dbReference type="PRO" id="PR:O45717"/>
<dbReference type="Proteomes" id="UP000001940">
    <property type="component" value="Chromosome I"/>
</dbReference>
<dbReference type="Bgee" id="WBGene00011230">
    <property type="expression patterns" value="Expressed in pharyngeal muscle cell (C elegans) and 4 other cell types or tissues"/>
</dbReference>
<dbReference type="GO" id="GO:0005813">
    <property type="term" value="C:centrosome"/>
    <property type="evidence" value="ECO:0000318"/>
    <property type="project" value="GO_Central"/>
</dbReference>
<dbReference type="GO" id="GO:0005871">
    <property type="term" value="C:kinesin complex"/>
    <property type="evidence" value="ECO:0000318"/>
    <property type="project" value="GO_Central"/>
</dbReference>
<dbReference type="GO" id="GO:0000776">
    <property type="term" value="C:kinetochore"/>
    <property type="evidence" value="ECO:0000318"/>
    <property type="project" value="GO_Central"/>
</dbReference>
<dbReference type="GO" id="GO:0005875">
    <property type="term" value="C:microtubule associated complex"/>
    <property type="evidence" value="ECO:0000303"/>
    <property type="project" value="ComplexPortal"/>
</dbReference>
<dbReference type="GO" id="GO:0005635">
    <property type="term" value="C:nuclear envelope"/>
    <property type="evidence" value="ECO:0000314"/>
    <property type="project" value="WormBase"/>
</dbReference>
<dbReference type="GO" id="GO:0045202">
    <property type="term" value="C:synapse"/>
    <property type="evidence" value="ECO:0007669"/>
    <property type="project" value="GOC"/>
</dbReference>
<dbReference type="GO" id="GO:0008017">
    <property type="term" value="F:microtubule binding"/>
    <property type="evidence" value="ECO:0000318"/>
    <property type="project" value="GO_Central"/>
</dbReference>
<dbReference type="GO" id="GO:0016477">
    <property type="term" value="P:cell migration"/>
    <property type="evidence" value="ECO:0000318"/>
    <property type="project" value="GO_Central"/>
</dbReference>
<dbReference type="GO" id="GO:0051642">
    <property type="term" value="P:centrosome localization"/>
    <property type="evidence" value="ECO:0000318"/>
    <property type="project" value="GO_Central"/>
</dbReference>
<dbReference type="GO" id="GO:0007059">
    <property type="term" value="P:chromosome segregation"/>
    <property type="evidence" value="ECO:0000318"/>
    <property type="project" value="GO_Central"/>
</dbReference>
<dbReference type="GO" id="GO:0051303">
    <property type="term" value="P:establishment of chromosome localization"/>
    <property type="evidence" value="ECO:0000318"/>
    <property type="project" value="GO_Central"/>
</dbReference>
<dbReference type="GO" id="GO:0000132">
    <property type="term" value="P:establishment of mitotic spindle orientation"/>
    <property type="evidence" value="ECO:0000318"/>
    <property type="project" value="GO_Central"/>
</dbReference>
<dbReference type="GO" id="GO:0007020">
    <property type="term" value="P:microtubule nucleation"/>
    <property type="evidence" value="ECO:0000318"/>
    <property type="project" value="GO_Central"/>
</dbReference>
<dbReference type="GO" id="GO:0007100">
    <property type="term" value="P:mitotic centrosome separation"/>
    <property type="evidence" value="ECO:0000318"/>
    <property type="project" value="GO_Central"/>
</dbReference>
<dbReference type="GO" id="GO:0007097">
    <property type="term" value="P:nuclear migration"/>
    <property type="evidence" value="ECO:0000315"/>
    <property type="project" value="WormBase"/>
</dbReference>
<dbReference type="GO" id="GO:0031022">
    <property type="term" value="P:nuclear migration along microfilament"/>
    <property type="evidence" value="ECO:0000315"/>
    <property type="project" value="ComplexPortal"/>
</dbReference>
<dbReference type="GO" id="GO:0051932">
    <property type="term" value="P:synaptic transmission, GABAergic"/>
    <property type="evidence" value="ECO:0000315"/>
    <property type="project" value="WormBase"/>
</dbReference>
<dbReference type="GO" id="GO:0048489">
    <property type="term" value="P:synaptic vesicle transport"/>
    <property type="evidence" value="ECO:0000315"/>
    <property type="project" value="WormBase"/>
</dbReference>
<dbReference type="GO" id="GO:0047496">
    <property type="term" value="P:vesicle transport along microtubule"/>
    <property type="evidence" value="ECO:0000318"/>
    <property type="project" value="GO_Central"/>
</dbReference>
<dbReference type="Gene3D" id="6.10.250.1080">
    <property type="match status" value="1"/>
</dbReference>
<dbReference type="InterPro" id="IPR033494">
    <property type="entry name" value="NUDE"/>
</dbReference>
<dbReference type="PANTHER" id="PTHR10921:SF1">
    <property type="entry name" value="NUCLEAR DISTRIBUTION PROTEIN NUDE HOMOLOG"/>
    <property type="match status" value="1"/>
</dbReference>
<dbReference type="PANTHER" id="PTHR10921">
    <property type="entry name" value="NUCLEAR DISTRIBUTION PROTEIN NUDE HOMOLOG 1"/>
    <property type="match status" value="1"/>
</dbReference>
<protein>
    <recommendedName>
        <fullName evidence="6">Protein nud-2</fullName>
    </recommendedName>
</protein>
<feature type="chain" id="PRO_0000443516" description="Protein nud-2" evidence="6">
    <location>
        <begin position="1"/>
        <end position="293"/>
    </location>
</feature>
<feature type="region of interest" description="Required for interaction with unc-83 isoform c" evidence="3">
    <location>
        <begin position="239"/>
        <end position="293"/>
    </location>
</feature>
<feature type="coiled-coil region" evidence="1">
    <location>
        <begin position="36"/>
        <end position="147"/>
    </location>
</feature>
<feature type="mutagenesis site" description="Abolishes interaction with unc-83 isoform c." evidence="3">
    <location>
        <begin position="239"/>
        <end position="293"/>
    </location>
</feature>
<sequence>MDLSEDQIRGLPHHELLGHFLQMREEFNEFQTSSAEIEKMMDSELDDLKTQLKKAETRVQQMTTEQIRNKDRQDDSRVQFAQVEEQLRRENSHLHEQCESQRERIRKLEQRNDVLETSERNKEYLASDLGSKLDHAIEKIAMLESELYERQVAAEEMHRLREEQLRTTERPRLIVEPLRNDPEILPDEPSPGPSKEEFKMSSEDVFMEDVQHHEDVRMEETIAKIDEVRIDDNKNIQEKSQRVSTGTGAGACINRIVKDLMTKVERLDSILSTIRVSNNSSNNNSSHLTTTRA</sequence>
<name>NUD2_CAEEL</name>
<organism evidence="7">
    <name type="scientific">Caenorhabditis elegans</name>
    <dbReference type="NCBI Taxonomy" id="6239"/>
    <lineage>
        <taxon>Eukaryota</taxon>
        <taxon>Metazoa</taxon>
        <taxon>Ecdysozoa</taxon>
        <taxon>Nematoda</taxon>
        <taxon>Chromadorea</taxon>
        <taxon>Rhabditida</taxon>
        <taxon>Rhabditina</taxon>
        <taxon>Rhabditomorpha</taxon>
        <taxon>Rhabditoidea</taxon>
        <taxon>Rhabditidae</taxon>
        <taxon>Peloderinae</taxon>
        <taxon>Caenorhabditis</taxon>
    </lineage>
</organism>
<keyword id="KW-0175">Coiled coil</keyword>
<keyword id="KW-0539">Nucleus</keyword>
<keyword id="KW-1185">Reference proteome</keyword>
<reference evidence="7" key="1">
    <citation type="journal article" date="1998" name="Science">
        <title>Genome sequence of the nematode C. elegans: a platform for investigating biology.</title>
        <authorList>
            <consortium name="The C. elegans sequencing consortium"/>
        </authorList>
    </citation>
    <scope>NUCLEOTIDE SEQUENCE [LARGE SCALE GENOMIC DNA]</scope>
    <source>
        <strain evidence="7">Bristol N2</strain>
    </source>
</reference>
<reference evidence="6" key="2">
    <citation type="journal article" date="2006" name="Brain Res.">
        <title>Genetic interactions among cortical malformation genes that influence susceptibility to convulsions in C. elegans.</title>
        <authorList>
            <person name="Locke C.J."/>
            <person name="Williams S.N."/>
            <person name="Schwarz E.M."/>
            <person name="Caldwell G.A."/>
            <person name="Caldwell K.A."/>
        </authorList>
    </citation>
    <scope>FUNCTION</scope>
    <scope>INTERACTION WITH LIS-1</scope>
    <scope>TISSUE SPECIFICITY</scope>
    <scope>DISRUPTION PHENOTYPE</scope>
</reference>
<reference evidence="6" key="3">
    <citation type="journal article" date="2010" name="Dev. Biol.">
        <title>UNC-83 coordinates kinesin-1 and dynein activities at the nuclear envelope during nuclear migration.</title>
        <authorList>
            <person name="Fridolfsson H.N."/>
            <person name="Ly N."/>
            <person name="Meyerzon M."/>
            <person name="Starr D.A."/>
        </authorList>
    </citation>
    <scope>FUNCTION</scope>
    <scope>IDENTIFICATION IN A COMPLEX WITH LIS-1</scope>
    <scope>INTERACTION WITH UNC-83</scope>
    <scope>SUBCELLULAR LOCATION</scope>
    <scope>DISRUPTION PHENOTYPE</scope>
    <scope>MUTAGENESIS OF 239-LYS--ALA-293</scope>
</reference>
<reference key="4">
    <citation type="journal article" date="2016" name="Development">
        <title>Nuclei migrate through constricted spaces using microtubule motors and actin networks in C. elegans hypodermal cells.</title>
        <authorList>
            <person name="Bone C.R."/>
            <person name="Chang Y.T."/>
            <person name="Cain N.E."/>
            <person name="Murphy S.P."/>
            <person name="Starr D.A."/>
        </authorList>
    </citation>
    <scope>FUNCTION</scope>
</reference>